<proteinExistence type="evidence at transcript level"/>
<name>CRIS1_MACMU</name>
<accession>Q9XSD3</accession>
<gene>
    <name type="primary">CRISP1</name>
</gene>
<reference key="1">
    <citation type="journal article" date="1999" name="J. Androl.">
        <title>Cloning and characterization of an androgen-dependent acidic epididymal glycoprotein/CRISP1-like protein from the monkey.</title>
        <authorList>
            <person name="Sivashanmugam P."/>
            <person name="Richardson R.T."/>
            <person name="Hall S."/>
            <person name="Hamil K.G."/>
            <person name="French F.S."/>
            <person name="O'Rand M.G."/>
        </authorList>
    </citation>
    <scope>NUCLEOTIDE SEQUENCE [MRNA]</scope>
    <scope>TISSUE SPECIFICITY</scope>
</reference>
<comment type="function">
    <text evidence="1">May have a role in sperm-egg fusion and maturation.</text>
</comment>
<comment type="subcellular location">
    <text evidence="1">Located in the lumen and epithelium of distal ductus efferentes and epididymal ducts, and on the postacrosomal region of the sperm head.</text>
</comment>
<comment type="tissue specificity">
    <text evidence="4">Expressed in all the regions of the epididymis except the caput and is not detected in the testis, prostate, seminal vesicle, and brain.</text>
</comment>
<comment type="similarity">
    <text evidence="5">Belongs to the CRISP family.</text>
</comment>
<dbReference type="EMBL" id="AF123894">
    <property type="protein sequence ID" value="AAD27611.1"/>
    <property type="molecule type" value="mRNA"/>
</dbReference>
<dbReference type="RefSeq" id="NP_001027983.1">
    <property type="nucleotide sequence ID" value="NM_001032811.1"/>
</dbReference>
<dbReference type="SMR" id="Q9XSD3"/>
<dbReference type="FunCoup" id="Q9XSD3">
    <property type="interactions" value="2"/>
</dbReference>
<dbReference type="STRING" id="9544.ENSMMUP00000005602"/>
<dbReference type="GlyCosmos" id="Q9XSD3">
    <property type="glycosylation" value="2 sites, No reported glycans"/>
</dbReference>
<dbReference type="PaxDb" id="9544-ENSMMUP00000005602"/>
<dbReference type="GeneID" id="574111"/>
<dbReference type="KEGG" id="mcc:574111"/>
<dbReference type="CTD" id="167"/>
<dbReference type="eggNOG" id="KOG3017">
    <property type="taxonomic scope" value="Eukaryota"/>
</dbReference>
<dbReference type="HOGENOM" id="CLU_035730_2_1_1"/>
<dbReference type="InParanoid" id="Q9XSD3"/>
<dbReference type="OrthoDB" id="737510at2759"/>
<dbReference type="TreeFam" id="TF316148"/>
<dbReference type="Proteomes" id="UP000006718">
    <property type="component" value="Unassembled WGS sequence"/>
</dbReference>
<dbReference type="GO" id="GO:0005615">
    <property type="term" value="C:extracellular space"/>
    <property type="evidence" value="ECO:0000318"/>
    <property type="project" value="GO_Central"/>
</dbReference>
<dbReference type="GO" id="GO:0007339">
    <property type="term" value="P:binding of sperm to zona pellucida"/>
    <property type="evidence" value="ECO:0000318"/>
    <property type="project" value="GO_Central"/>
</dbReference>
<dbReference type="GO" id="GO:0019953">
    <property type="term" value="P:sexual reproduction"/>
    <property type="evidence" value="ECO:0000318"/>
    <property type="project" value="GO_Central"/>
</dbReference>
<dbReference type="CDD" id="cd05383">
    <property type="entry name" value="CAP_CRISP"/>
    <property type="match status" value="1"/>
</dbReference>
<dbReference type="FunFam" id="1.10.10.740:FF:000001">
    <property type="entry name" value="Cysteine-rich secretory protein 2"/>
    <property type="match status" value="1"/>
</dbReference>
<dbReference type="FunFam" id="3.40.33.10:FF:000005">
    <property type="entry name" value="Cysteine-rich secretory protein 2"/>
    <property type="match status" value="1"/>
</dbReference>
<dbReference type="Gene3D" id="3.40.33.10">
    <property type="entry name" value="CAP"/>
    <property type="match status" value="1"/>
</dbReference>
<dbReference type="Gene3D" id="1.10.10.740">
    <property type="entry name" value="Crisp domain"/>
    <property type="match status" value="1"/>
</dbReference>
<dbReference type="InterPro" id="IPR018244">
    <property type="entry name" value="Allrgn_V5/Tpx1_CS"/>
</dbReference>
<dbReference type="InterPro" id="IPR014044">
    <property type="entry name" value="CAP_dom"/>
</dbReference>
<dbReference type="InterPro" id="IPR035940">
    <property type="entry name" value="CAP_sf"/>
</dbReference>
<dbReference type="InterPro" id="IPR042076">
    <property type="entry name" value="Crisp-like_dom"/>
</dbReference>
<dbReference type="InterPro" id="IPR001283">
    <property type="entry name" value="CRISP-related"/>
</dbReference>
<dbReference type="InterPro" id="IPR013871">
    <property type="entry name" value="Cysteine_rich_secretory"/>
</dbReference>
<dbReference type="InterPro" id="IPR034117">
    <property type="entry name" value="SCP_CRISP"/>
</dbReference>
<dbReference type="InterPro" id="IPR003582">
    <property type="entry name" value="ShKT_dom"/>
</dbReference>
<dbReference type="InterPro" id="IPR002413">
    <property type="entry name" value="V5_allergen-like"/>
</dbReference>
<dbReference type="PANTHER" id="PTHR10334">
    <property type="entry name" value="CYSTEINE-RICH SECRETORY PROTEIN-RELATED"/>
    <property type="match status" value="1"/>
</dbReference>
<dbReference type="Pfam" id="PF00188">
    <property type="entry name" value="CAP"/>
    <property type="match status" value="1"/>
</dbReference>
<dbReference type="Pfam" id="PF08562">
    <property type="entry name" value="Crisp"/>
    <property type="match status" value="1"/>
</dbReference>
<dbReference type="PRINTS" id="PR00838">
    <property type="entry name" value="V5ALLERGEN"/>
</dbReference>
<dbReference type="PRINTS" id="PR00837">
    <property type="entry name" value="V5TPXLIKE"/>
</dbReference>
<dbReference type="SMART" id="SM00198">
    <property type="entry name" value="SCP"/>
    <property type="match status" value="1"/>
</dbReference>
<dbReference type="SUPFAM" id="SSF57546">
    <property type="entry name" value="Crisp domain-like"/>
    <property type="match status" value="1"/>
</dbReference>
<dbReference type="SUPFAM" id="SSF55797">
    <property type="entry name" value="PR-1-like"/>
    <property type="match status" value="1"/>
</dbReference>
<dbReference type="PROSITE" id="PS01009">
    <property type="entry name" value="CRISP_1"/>
    <property type="match status" value="1"/>
</dbReference>
<dbReference type="PROSITE" id="PS01010">
    <property type="entry name" value="CRISP_2"/>
    <property type="match status" value="1"/>
</dbReference>
<dbReference type="PROSITE" id="PS51670">
    <property type="entry name" value="SHKT"/>
    <property type="match status" value="1"/>
</dbReference>
<sequence length="249" mass="28653">MEIKHLLFLVAAACLLPVLSMKRKSAKKLFNKLVTDLPNVQQEIVNIHNTLRRGVVPPASNMLKMSWSEEAAQNAKIFSRYCDMTESNPLERRLPNTFCGENRNMTSYPVSWSSVIGVWYSESKYFRYGLWPSTDDDISTDRYTQIVWATSYLIGCAIAPCRHRGSPRYFYVCHYCHEGNDPETKHEPYKKGVPCEACPNNCEDKLCTNPCIYYDEYTDCSLEVRFLGCNHSTPRMFCKATCLCDTEIK</sequence>
<keyword id="KW-1015">Disulfide bond</keyword>
<keyword id="KW-0325">Glycoprotein</keyword>
<keyword id="KW-1185">Reference proteome</keyword>
<keyword id="KW-0732">Signal</keyword>
<organism>
    <name type="scientific">Macaca mulatta</name>
    <name type="common">Rhesus macaque</name>
    <dbReference type="NCBI Taxonomy" id="9544"/>
    <lineage>
        <taxon>Eukaryota</taxon>
        <taxon>Metazoa</taxon>
        <taxon>Chordata</taxon>
        <taxon>Craniata</taxon>
        <taxon>Vertebrata</taxon>
        <taxon>Euteleostomi</taxon>
        <taxon>Mammalia</taxon>
        <taxon>Eutheria</taxon>
        <taxon>Euarchontoglires</taxon>
        <taxon>Primates</taxon>
        <taxon>Haplorrhini</taxon>
        <taxon>Catarrhini</taxon>
        <taxon>Cercopithecidae</taxon>
        <taxon>Cercopithecinae</taxon>
        <taxon>Macaca</taxon>
    </lineage>
</organism>
<feature type="signal peptide" evidence="2">
    <location>
        <begin position="1"/>
        <end position="20"/>
    </location>
</feature>
<feature type="chain" id="PRO_0000006261" description="Cysteine-rich secretory protein 1">
    <location>
        <begin position="21"/>
        <end position="249"/>
    </location>
</feature>
<feature type="domain" description="SCP">
    <location>
        <begin position="45"/>
        <end position="175"/>
    </location>
</feature>
<feature type="domain" description="ShKT" evidence="3">
    <location>
        <begin position="211"/>
        <end position="244"/>
    </location>
</feature>
<feature type="glycosylation site" description="N-linked (GlcNAc...) asparagine" evidence="2">
    <location>
        <position position="104"/>
    </location>
</feature>
<feature type="glycosylation site" description="N-linked (GlcNAc...) asparagine" evidence="2">
    <location>
        <position position="230"/>
    </location>
</feature>
<feature type="disulfide bond" evidence="3">
    <location>
        <begin position="195"/>
        <end position="202"/>
    </location>
</feature>
<feature type="disulfide bond" evidence="3">
    <location>
        <begin position="198"/>
        <end position="207"/>
    </location>
</feature>
<feature type="disulfide bond" evidence="3">
    <location>
        <begin position="211"/>
        <end position="244"/>
    </location>
</feature>
<feature type="disulfide bond" evidence="3">
    <location>
        <begin position="220"/>
        <end position="238"/>
    </location>
</feature>
<feature type="disulfide bond" evidence="3">
    <location>
        <begin position="229"/>
        <end position="242"/>
    </location>
</feature>
<protein>
    <recommendedName>
        <fullName>Cysteine-rich secretory protein 1</fullName>
        <shortName>CRISP-1</shortName>
    </recommendedName>
    <alternativeName>
        <fullName>Androgen-dependent acidic epididymal glycoprotein</fullName>
        <shortName>AEG</shortName>
    </alternativeName>
    <alternativeName>
        <fullName>mAEG</fullName>
    </alternativeName>
</protein>
<evidence type="ECO:0000250" key="1"/>
<evidence type="ECO:0000255" key="2"/>
<evidence type="ECO:0000255" key="3">
    <source>
        <dbReference type="PROSITE-ProRule" id="PRU01005"/>
    </source>
</evidence>
<evidence type="ECO:0000269" key="4">
    <source>
    </source>
</evidence>
<evidence type="ECO:0000305" key="5"/>